<proteinExistence type="inferred from homology"/>
<evidence type="ECO:0000255" key="1">
    <source>
        <dbReference type="HAMAP-Rule" id="MF_00451"/>
    </source>
</evidence>
<accession>B5Z0Y7</accession>
<name>NDK_ECO5E</name>
<sequence>MAIERTFSIIKPNAVAKNVIGNIFARFEAAGFKIVGTKMLHLTVEQARGFYAEHDGKPFFDGLVEFMTSGPIVVSVLEGENAVQRHRDLLGATNPANALAGTLRADYADSLTENGTHGSDSVESAAREIAYFFGEGEVCPRTR</sequence>
<reference key="1">
    <citation type="journal article" date="2011" name="Proc. Natl. Acad. Sci. U.S.A.">
        <title>Genomic anatomy of Escherichia coli O157:H7 outbreaks.</title>
        <authorList>
            <person name="Eppinger M."/>
            <person name="Mammel M.K."/>
            <person name="Leclerc J.E."/>
            <person name="Ravel J."/>
            <person name="Cebula T.A."/>
        </authorList>
    </citation>
    <scope>NUCLEOTIDE SEQUENCE [LARGE SCALE GENOMIC DNA]</scope>
    <source>
        <strain>EC4115 / EHEC</strain>
    </source>
</reference>
<organism>
    <name type="scientific">Escherichia coli O157:H7 (strain EC4115 / EHEC)</name>
    <dbReference type="NCBI Taxonomy" id="444450"/>
    <lineage>
        <taxon>Bacteria</taxon>
        <taxon>Pseudomonadati</taxon>
        <taxon>Pseudomonadota</taxon>
        <taxon>Gammaproteobacteria</taxon>
        <taxon>Enterobacterales</taxon>
        <taxon>Enterobacteriaceae</taxon>
        <taxon>Escherichia</taxon>
    </lineage>
</organism>
<keyword id="KW-0067">ATP-binding</keyword>
<keyword id="KW-0963">Cytoplasm</keyword>
<keyword id="KW-0418">Kinase</keyword>
<keyword id="KW-0460">Magnesium</keyword>
<keyword id="KW-0479">Metal-binding</keyword>
<keyword id="KW-0546">Nucleotide metabolism</keyword>
<keyword id="KW-0547">Nucleotide-binding</keyword>
<keyword id="KW-0597">Phosphoprotein</keyword>
<keyword id="KW-0808">Transferase</keyword>
<comment type="function">
    <text evidence="1">Major role in the synthesis of nucleoside triphosphates other than ATP. The ATP gamma phosphate is transferred to the NDP beta phosphate via a ping-pong mechanism, using a phosphorylated active-site intermediate.</text>
</comment>
<comment type="catalytic activity">
    <reaction evidence="1">
        <text>a 2'-deoxyribonucleoside 5'-diphosphate + ATP = a 2'-deoxyribonucleoside 5'-triphosphate + ADP</text>
        <dbReference type="Rhea" id="RHEA:44640"/>
        <dbReference type="ChEBI" id="CHEBI:30616"/>
        <dbReference type="ChEBI" id="CHEBI:61560"/>
        <dbReference type="ChEBI" id="CHEBI:73316"/>
        <dbReference type="ChEBI" id="CHEBI:456216"/>
        <dbReference type="EC" id="2.7.4.6"/>
    </reaction>
</comment>
<comment type="catalytic activity">
    <reaction evidence="1">
        <text>a ribonucleoside 5'-diphosphate + ATP = a ribonucleoside 5'-triphosphate + ADP</text>
        <dbReference type="Rhea" id="RHEA:18113"/>
        <dbReference type="ChEBI" id="CHEBI:30616"/>
        <dbReference type="ChEBI" id="CHEBI:57930"/>
        <dbReference type="ChEBI" id="CHEBI:61557"/>
        <dbReference type="ChEBI" id="CHEBI:456216"/>
        <dbReference type="EC" id="2.7.4.6"/>
    </reaction>
</comment>
<comment type="cofactor">
    <cofactor evidence="1">
        <name>Mg(2+)</name>
        <dbReference type="ChEBI" id="CHEBI:18420"/>
    </cofactor>
</comment>
<comment type="subunit">
    <text evidence="1">Homotetramer.</text>
</comment>
<comment type="subcellular location">
    <subcellularLocation>
        <location evidence="1">Cytoplasm</location>
    </subcellularLocation>
</comment>
<comment type="similarity">
    <text evidence="1">Belongs to the NDK family.</text>
</comment>
<protein>
    <recommendedName>
        <fullName evidence="1">Nucleoside diphosphate kinase</fullName>
        <shortName evidence="1">NDK</shortName>
        <shortName evidence="1">NDP kinase</shortName>
        <ecNumber evidence="1">2.7.4.6</ecNumber>
    </recommendedName>
    <alternativeName>
        <fullName evidence="1">Nucleoside-2-P kinase</fullName>
    </alternativeName>
</protein>
<gene>
    <name evidence="1" type="primary">ndk</name>
    <name type="ordered locus">ECH74115_3743</name>
</gene>
<dbReference type="EC" id="2.7.4.6" evidence="1"/>
<dbReference type="EMBL" id="CP001164">
    <property type="protein sequence ID" value="ACI38635.1"/>
    <property type="molecule type" value="Genomic_DNA"/>
</dbReference>
<dbReference type="RefSeq" id="WP_000963837.1">
    <property type="nucleotide sequence ID" value="NC_011353.1"/>
</dbReference>
<dbReference type="SMR" id="B5Z0Y7"/>
<dbReference type="GeneID" id="93774618"/>
<dbReference type="KEGG" id="ecf:ECH74115_3743"/>
<dbReference type="HOGENOM" id="CLU_060216_8_1_6"/>
<dbReference type="GO" id="GO:0005737">
    <property type="term" value="C:cytoplasm"/>
    <property type="evidence" value="ECO:0007669"/>
    <property type="project" value="UniProtKB-SubCell"/>
</dbReference>
<dbReference type="GO" id="GO:0005524">
    <property type="term" value="F:ATP binding"/>
    <property type="evidence" value="ECO:0007669"/>
    <property type="project" value="UniProtKB-UniRule"/>
</dbReference>
<dbReference type="GO" id="GO:0046872">
    <property type="term" value="F:metal ion binding"/>
    <property type="evidence" value="ECO:0007669"/>
    <property type="project" value="UniProtKB-KW"/>
</dbReference>
<dbReference type="GO" id="GO:0004550">
    <property type="term" value="F:nucleoside diphosphate kinase activity"/>
    <property type="evidence" value="ECO:0007669"/>
    <property type="project" value="UniProtKB-UniRule"/>
</dbReference>
<dbReference type="GO" id="GO:0006241">
    <property type="term" value="P:CTP biosynthetic process"/>
    <property type="evidence" value="ECO:0007669"/>
    <property type="project" value="UniProtKB-UniRule"/>
</dbReference>
<dbReference type="GO" id="GO:0006183">
    <property type="term" value="P:GTP biosynthetic process"/>
    <property type="evidence" value="ECO:0007669"/>
    <property type="project" value="UniProtKB-UniRule"/>
</dbReference>
<dbReference type="GO" id="GO:0006228">
    <property type="term" value="P:UTP biosynthetic process"/>
    <property type="evidence" value="ECO:0007669"/>
    <property type="project" value="UniProtKB-UniRule"/>
</dbReference>
<dbReference type="CDD" id="cd04413">
    <property type="entry name" value="NDPk_I"/>
    <property type="match status" value="1"/>
</dbReference>
<dbReference type="FunFam" id="3.30.70.141:FF:000001">
    <property type="entry name" value="Nucleoside diphosphate kinase"/>
    <property type="match status" value="1"/>
</dbReference>
<dbReference type="Gene3D" id="3.30.70.141">
    <property type="entry name" value="Nucleoside diphosphate kinase-like domain"/>
    <property type="match status" value="1"/>
</dbReference>
<dbReference type="HAMAP" id="MF_00451">
    <property type="entry name" value="NDP_kinase"/>
    <property type="match status" value="1"/>
</dbReference>
<dbReference type="InterPro" id="IPR034907">
    <property type="entry name" value="NDK-like_dom"/>
</dbReference>
<dbReference type="InterPro" id="IPR036850">
    <property type="entry name" value="NDK-like_dom_sf"/>
</dbReference>
<dbReference type="InterPro" id="IPR001564">
    <property type="entry name" value="Nucleoside_diP_kinase"/>
</dbReference>
<dbReference type="InterPro" id="IPR023005">
    <property type="entry name" value="Nucleoside_diP_kinase_AS"/>
</dbReference>
<dbReference type="NCBIfam" id="NF001908">
    <property type="entry name" value="PRK00668.1"/>
    <property type="match status" value="1"/>
</dbReference>
<dbReference type="PANTHER" id="PTHR46161">
    <property type="entry name" value="NUCLEOSIDE DIPHOSPHATE KINASE"/>
    <property type="match status" value="1"/>
</dbReference>
<dbReference type="PANTHER" id="PTHR46161:SF3">
    <property type="entry name" value="NUCLEOSIDE DIPHOSPHATE KINASE DDB_G0292928-RELATED"/>
    <property type="match status" value="1"/>
</dbReference>
<dbReference type="Pfam" id="PF00334">
    <property type="entry name" value="NDK"/>
    <property type="match status" value="1"/>
</dbReference>
<dbReference type="PRINTS" id="PR01243">
    <property type="entry name" value="NUCDPKINASE"/>
</dbReference>
<dbReference type="SMART" id="SM00562">
    <property type="entry name" value="NDK"/>
    <property type="match status" value="1"/>
</dbReference>
<dbReference type="SUPFAM" id="SSF54919">
    <property type="entry name" value="Nucleoside diphosphate kinase, NDK"/>
    <property type="match status" value="1"/>
</dbReference>
<dbReference type="PROSITE" id="PS00469">
    <property type="entry name" value="NDPK"/>
    <property type="match status" value="1"/>
</dbReference>
<dbReference type="PROSITE" id="PS51374">
    <property type="entry name" value="NDPK_LIKE"/>
    <property type="match status" value="1"/>
</dbReference>
<feature type="chain" id="PRO_1000124957" description="Nucleoside diphosphate kinase">
    <location>
        <begin position="1"/>
        <end position="143"/>
    </location>
</feature>
<feature type="active site" description="Pros-phosphohistidine intermediate" evidence="1">
    <location>
        <position position="117"/>
    </location>
</feature>
<feature type="binding site" evidence="1">
    <location>
        <position position="11"/>
    </location>
    <ligand>
        <name>ATP</name>
        <dbReference type="ChEBI" id="CHEBI:30616"/>
    </ligand>
</feature>
<feature type="binding site" evidence="1">
    <location>
        <position position="59"/>
    </location>
    <ligand>
        <name>ATP</name>
        <dbReference type="ChEBI" id="CHEBI:30616"/>
    </ligand>
</feature>
<feature type="binding site" evidence="1">
    <location>
        <position position="87"/>
    </location>
    <ligand>
        <name>ATP</name>
        <dbReference type="ChEBI" id="CHEBI:30616"/>
    </ligand>
</feature>
<feature type="binding site" evidence="1">
    <location>
        <position position="93"/>
    </location>
    <ligand>
        <name>ATP</name>
        <dbReference type="ChEBI" id="CHEBI:30616"/>
    </ligand>
</feature>
<feature type="binding site" evidence="1">
    <location>
        <position position="104"/>
    </location>
    <ligand>
        <name>ATP</name>
        <dbReference type="ChEBI" id="CHEBI:30616"/>
    </ligand>
</feature>
<feature type="binding site" evidence="1">
    <location>
        <position position="114"/>
    </location>
    <ligand>
        <name>ATP</name>
        <dbReference type="ChEBI" id="CHEBI:30616"/>
    </ligand>
</feature>